<feature type="chain" id="PRO_0000141814" description="3-isopropylmalate dehydratase small subunit">
    <location>
        <begin position="1"/>
        <end position="196"/>
    </location>
</feature>
<accession>Q8FPR2</accession>
<organism>
    <name type="scientific">Corynebacterium efficiens (strain DSM 44549 / YS-314 / AJ 12310 / JCM 11189 / NBRC 100395)</name>
    <dbReference type="NCBI Taxonomy" id="196164"/>
    <lineage>
        <taxon>Bacteria</taxon>
        <taxon>Bacillati</taxon>
        <taxon>Actinomycetota</taxon>
        <taxon>Actinomycetes</taxon>
        <taxon>Mycobacteriales</taxon>
        <taxon>Corynebacteriaceae</taxon>
        <taxon>Corynebacterium</taxon>
    </lineage>
</organism>
<keyword id="KW-0028">Amino-acid biosynthesis</keyword>
<keyword id="KW-0100">Branched-chain amino acid biosynthesis</keyword>
<keyword id="KW-0432">Leucine biosynthesis</keyword>
<keyword id="KW-0456">Lyase</keyword>
<keyword id="KW-1185">Reference proteome</keyword>
<dbReference type="EC" id="4.2.1.33" evidence="1"/>
<dbReference type="EMBL" id="BA000035">
    <property type="protein sequence ID" value="BAC18238.1"/>
    <property type="molecule type" value="Genomic_DNA"/>
</dbReference>
<dbReference type="RefSeq" id="WP_006769391.1">
    <property type="nucleotide sequence ID" value="NC_004369.1"/>
</dbReference>
<dbReference type="SMR" id="Q8FPR2"/>
<dbReference type="STRING" id="196164.gene:10741842"/>
<dbReference type="KEGG" id="cef:CE1428"/>
<dbReference type="eggNOG" id="COG0066">
    <property type="taxonomic scope" value="Bacteria"/>
</dbReference>
<dbReference type="HOGENOM" id="CLU_081378_0_1_11"/>
<dbReference type="OrthoDB" id="9777465at2"/>
<dbReference type="UniPathway" id="UPA00048">
    <property type="reaction ID" value="UER00071"/>
</dbReference>
<dbReference type="Proteomes" id="UP000001409">
    <property type="component" value="Chromosome"/>
</dbReference>
<dbReference type="GO" id="GO:0009316">
    <property type="term" value="C:3-isopropylmalate dehydratase complex"/>
    <property type="evidence" value="ECO:0007669"/>
    <property type="project" value="InterPro"/>
</dbReference>
<dbReference type="GO" id="GO:0003861">
    <property type="term" value="F:3-isopropylmalate dehydratase activity"/>
    <property type="evidence" value="ECO:0007669"/>
    <property type="project" value="UniProtKB-UniRule"/>
</dbReference>
<dbReference type="GO" id="GO:0009098">
    <property type="term" value="P:L-leucine biosynthetic process"/>
    <property type="evidence" value="ECO:0007669"/>
    <property type="project" value="UniProtKB-UniRule"/>
</dbReference>
<dbReference type="CDD" id="cd01577">
    <property type="entry name" value="IPMI_Swivel"/>
    <property type="match status" value="1"/>
</dbReference>
<dbReference type="FunFam" id="3.20.19.10:FF:000003">
    <property type="entry name" value="3-isopropylmalate dehydratase small subunit"/>
    <property type="match status" value="1"/>
</dbReference>
<dbReference type="Gene3D" id="3.20.19.10">
    <property type="entry name" value="Aconitase, domain 4"/>
    <property type="match status" value="1"/>
</dbReference>
<dbReference type="HAMAP" id="MF_01031">
    <property type="entry name" value="LeuD_type1"/>
    <property type="match status" value="1"/>
</dbReference>
<dbReference type="InterPro" id="IPR004431">
    <property type="entry name" value="3-IsopropMal_deHydase_ssu"/>
</dbReference>
<dbReference type="InterPro" id="IPR015928">
    <property type="entry name" value="Aconitase/3IPM_dehydase_swvl"/>
</dbReference>
<dbReference type="InterPro" id="IPR000573">
    <property type="entry name" value="AconitaseA/IPMdHydase_ssu_swvl"/>
</dbReference>
<dbReference type="InterPro" id="IPR033940">
    <property type="entry name" value="IPMI_Swivel"/>
</dbReference>
<dbReference type="InterPro" id="IPR050075">
    <property type="entry name" value="LeuD"/>
</dbReference>
<dbReference type="NCBIfam" id="TIGR00171">
    <property type="entry name" value="leuD"/>
    <property type="match status" value="1"/>
</dbReference>
<dbReference type="NCBIfam" id="NF002458">
    <property type="entry name" value="PRK01641.1"/>
    <property type="match status" value="1"/>
</dbReference>
<dbReference type="PANTHER" id="PTHR43345:SF5">
    <property type="entry name" value="3-ISOPROPYLMALATE DEHYDRATASE SMALL SUBUNIT"/>
    <property type="match status" value="1"/>
</dbReference>
<dbReference type="PANTHER" id="PTHR43345">
    <property type="entry name" value="3-ISOPROPYLMALATE DEHYDRATASE SMALL SUBUNIT 2-RELATED-RELATED"/>
    <property type="match status" value="1"/>
</dbReference>
<dbReference type="Pfam" id="PF00694">
    <property type="entry name" value="Aconitase_C"/>
    <property type="match status" value="1"/>
</dbReference>
<dbReference type="SUPFAM" id="SSF52016">
    <property type="entry name" value="LeuD/IlvD-like"/>
    <property type="match status" value="1"/>
</dbReference>
<evidence type="ECO:0000255" key="1">
    <source>
        <dbReference type="HAMAP-Rule" id="MF_01031"/>
    </source>
</evidence>
<gene>
    <name evidence="1" type="primary">leuD</name>
    <name type="ordered locus">CE1428</name>
</gene>
<comment type="function">
    <text evidence="1">Catalyzes the isomerization between 2-isopropylmalate and 3-isopropylmalate, via the formation of 2-isopropylmaleate.</text>
</comment>
<comment type="catalytic activity">
    <reaction evidence="1">
        <text>(2R,3S)-3-isopropylmalate = (2S)-2-isopropylmalate</text>
        <dbReference type="Rhea" id="RHEA:32287"/>
        <dbReference type="ChEBI" id="CHEBI:1178"/>
        <dbReference type="ChEBI" id="CHEBI:35121"/>
        <dbReference type="EC" id="4.2.1.33"/>
    </reaction>
</comment>
<comment type="pathway">
    <text evidence="1">Amino-acid biosynthesis; L-leucine biosynthesis; L-leucine from 3-methyl-2-oxobutanoate: step 2/4.</text>
</comment>
<comment type="subunit">
    <text evidence="1">Heterodimer of LeuC and LeuD.</text>
</comment>
<comment type="similarity">
    <text evidence="1">Belongs to the LeuD family. LeuD type 1 subfamily.</text>
</comment>
<sequence length="196" mass="22028">MEKFIKHTGVGVPLQRSNVDTDQIIPAVYLKRVTRTGFEDGLFSNWRKNDPDFVLNQDTYKNGSVLIAGPDFGTGSSREHAVWALMDYGFRAVFSSRFADIFRGNSGKAGLLTGIMEQSDIELLWKLMEQTPGLEMTVDLENQTVVAGDTVISFEVDPYIRWRLMEGLDDVGLTLRKVDEIEAYEAKRPAFKPSAL</sequence>
<proteinExistence type="inferred from homology"/>
<reference key="1">
    <citation type="journal article" date="2003" name="Genome Res.">
        <title>Comparative complete genome sequence analysis of the amino acid replacements responsible for the thermostability of Corynebacterium efficiens.</title>
        <authorList>
            <person name="Nishio Y."/>
            <person name="Nakamura Y."/>
            <person name="Kawarabayasi Y."/>
            <person name="Usuda Y."/>
            <person name="Kimura E."/>
            <person name="Sugimoto S."/>
            <person name="Matsui K."/>
            <person name="Yamagishi A."/>
            <person name="Kikuchi H."/>
            <person name="Ikeo K."/>
            <person name="Gojobori T."/>
        </authorList>
    </citation>
    <scope>NUCLEOTIDE SEQUENCE [LARGE SCALE GENOMIC DNA]</scope>
    <source>
        <strain>DSM 44549 / YS-314 / AJ 12310 / JCM 11189 / NBRC 100395</strain>
    </source>
</reference>
<protein>
    <recommendedName>
        <fullName evidence="1">3-isopropylmalate dehydratase small subunit</fullName>
        <ecNumber evidence="1">4.2.1.33</ecNumber>
    </recommendedName>
    <alternativeName>
        <fullName evidence="1">Alpha-IPM isomerase</fullName>
        <shortName evidence="1">IPMI</shortName>
    </alternativeName>
    <alternativeName>
        <fullName evidence="1">Isopropylmalate isomerase</fullName>
    </alternativeName>
</protein>
<name>LEUD_COREF</name>